<proteinExistence type="evidence at protein level"/>
<comment type="function">
    <text evidence="1">Enhancer-binding elongation factor that specifically binds enhancers in embryonic stem cells (ES cells), marks them, and is required for their future activation during stem cell specification. Elongation factor component of the super elongation complex (SEC), a complex required to increase the catalytic rate of RNA polymerase II transcription by suppressing transient pausing by the polymerase at multiple sites along the DNA. Component of the little elongation complex (LEC), a complex required to regulate small nuclear RNA (snRNA) gene transcription by RNA polymerase II and III. Does not only bind to enhancer regions of active genes, but also marks the enhancers that are in a poised or inactive state in ES cells and is required for establishing proper RNA polymerase II occupancy at developmentally regulated genes in a cohesin-dependent manner. Probably required for priming developmentally regulated genes for later recruitment of the super elongation complex (SEC), for transcriptional activation during differentiation. Required for recruitment of P-TEFb within SEC during differentiation. Probably preloaded on germ cell chromatin, suggesting that it may prime gene activation by marking enhancers as early as in the germ cells. Promoting epithelial-mesenchymal transition (EMT) (By similarity).</text>
</comment>
<comment type="subunit">
    <text evidence="1">Interacts with AFF4. Component of the super elongation complex (SEC), at least composed of EAF1, EAF2, CDK9, MLLT3/AF9, AFF (AFF1 or AFF4), the P-TEFb complex and ELL (ELL, ELL2 or ELL3). Component of the little elongation complex (LEC), at least composed of ELL (ELL, ELL2 or ELL3), ZC3H8, ICE1 and ICE2 (By similarity).</text>
</comment>
<comment type="subcellular location">
    <subcellularLocation>
        <location evidence="1">Nucleus</location>
    </subcellularLocation>
</comment>
<comment type="similarity">
    <text evidence="4">Belongs to the ELL/occludin family.</text>
</comment>
<feature type="chain" id="PRO_0000421767" description="RNA polymerase II elongation factor ELL3">
    <location>
        <begin position="1"/>
        <end position="387"/>
    </location>
</feature>
<feature type="domain" description="OCEL" evidence="2">
    <location>
        <begin position="275"/>
        <end position="385"/>
    </location>
</feature>
<feature type="region of interest" description="Disordered" evidence="3">
    <location>
        <begin position="127"/>
        <end position="148"/>
    </location>
</feature>
<feature type="region of interest" description="Disordered" evidence="3">
    <location>
        <begin position="186"/>
        <end position="275"/>
    </location>
</feature>
<feature type="compositionally biased region" description="Polar residues" evidence="3">
    <location>
        <begin position="230"/>
        <end position="239"/>
    </location>
</feature>
<feature type="compositionally biased region" description="Acidic residues" evidence="3">
    <location>
        <begin position="240"/>
        <end position="251"/>
    </location>
</feature>
<feature type="compositionally biased region" description="Low complexity" evidence="3">
    <location>
        <begin position="257"/>
        <end position="271"/>
    </location>
</feature>
<feature type="modified residue" description="Phosphoserine" evidence="5">
    <location>
        <position position="240"/>
    </location>
</feature>
<keyword id="KW-0539">Nucleus</keyword>
<keyword id="KW-0597">Phosphoprotein</keyword>
<keyword id="KW-1185">Reference proteome</keyword>
<keyword id="KW-0804">Transcription</keyword>
<keyword id="KW-0805">Transcription regulation</keyword>
<name>ELL3_RAT</name>
<organism>
    <name type="scientific">Rattus norvegicus</name>
    <name type="common">Rat</name>
    <dbReference type="NCBI Taxonomy" id="10116"/>
    <lineage>
        <taxon>Eukaryota</taxon>
        <taxon>Metazoa</taxon>
        <taxon>Chordata</taxon>
        <taxon>Craniata</taxon>
        <taxon>Vertebrata</taxon>
        <taxon>Euteleostomi</taxon>
        <taxon>Mammalia</taxon>
        <taxon>Eutheria</taxon>
        <taxon>Euarchontoglires</taxon>
        <taxon>Glires</taxon>
        <taxon>Rodentia</taxon>
        <taxon>Myomorpha</taxon>
        <taxon>Muroidea</taxon>
        <taxon>Muridae</taxon>
        <taxon>Murinae</taxon>
        <taxon>Rattus</taxon>
    </lineage>
</organism>
<gene>
    <name type="primary">Ell3</name>
</gene>
<reference key="1">
    <citation type="journal article" date="2004" name="Nature">
        <title>Genome sequence of the Brown Norway rat yields insights into mammalian evolution.</title>
        <authorList>
            <person name="Gibbs R.A."/>
            <person name="Weinstock G.M."/>
            <person name="Metzker M.L."/>
            <person name="Muzny D.M."/>
            <person name="Sodergren E.J."/>
            <person name="Scherer S."/>
            <person name="Scott G."/>
            <person name="Steffen D."/>
            <person name="Worley K.C."/>
            <person name="Burch P.E."/>
            <person name="Okwuonu G."/>
            <person name="Hines S."/>
            <person name="Lewis L."/>
            <person name="Deramo C."/>
            <person name="Delgado O."/>
            <person name="Dugan-Rocha S."/>
            <person name="Miner G."/>
            <person name="Morgan M."/>
            <person name="Hawes A."/>
            <person name="Gill R."/>
            <person name="Holt R.A."/>
            <person name="Adams M.D."/>
            <person name="Amanatides P.G."/>
            <person name="Baden-Tillson H."/>
            <person name="Barnstead M."/>
            <person name="Chin S."/>
            <person name="Evans C.A."/>
            <person name="Ferriera S."/>
            <person name="Fosler C."/>
            <person name="Glodek A."/>
            <person name="Gu Z."/>
            <person name="Jennings D."/>
            <person name="Kraft C.L."/>
            <person name="Nguyen T."/>
            <person name="Pfannkoch C.M."/>
            <person name="Sitter C."/>
            <person name="Sutton G.G."/>
            <person name="Venter J.C."/>
            <person name="Woodage T."/>
            <person name="Smith D."/>
            <person name="Lee H.-M."/>
            <person name="Gustafson E."/>
            <person name="Cahill P."/>
            <person name="Kana A."/>
            <person name="Doucette-Stamm L."/>
            <person name="Weinstock K."/>
            <person name="Fechtel K."/>
            <person name="Weiss R.B."/>
            <person name="Dunn D.M."/>
            <person name="Green E.D."/>
            <person name="Blakesley R.W."/>
            <person name="Bouffard G.G."/>
            <person name="De Jong P.J."/>
            <person name="Osoegawa K."/>
            <person name="Zhu B."/>
            <person name="Marra M."/>
            <person name="Schein J."/>
            <person name="Bosdet I."/>
            <person name="Fjell C."/>
            <person name="Jones S."/>
            <person name="Krzywinski M."/>
            <person name="Mathewson C."/>
            <person name="Siddiqui A."/>
            <person name="Wye N."/>
            <person name="McPherson J."/>
            <person name="Zhao S."/>
            <person name="Fraser C.M."/>
            <person name="Shetty J."/>
            <person name="Shatsman S."/>
            <person name="Geer K."/>
            <person name="Chen Y."/>
            <person name="Abramzon S."/>
            <person name="Nierman W.C."/>
            <person name="Havlak P.H."/>
            <person name="Chen R."/>
            <person name="Durbin K.J."/>
            <person name="Egan A."/>
            <person name="Ren Y."/>
            <person name="Song X.-Z."/>
            <person name="Li B."/>
            <person name="Liu Y."/>
            <person name="Qin X."/>
            <person name="Cawley S."/>
            <person name="Cooney A.J."/>
            <person name="D'Souza L.M."/>
            <person name="Martin K."/>
            <person name="Wu J.Q."/>
            <person name="Gonzalez-Garay M.L."/>
            <person name="Jackson A.R."/>
            <person name="Kalafus K.J."/>
            <person name="McLeod M.P."/>
            <person name="Milosavljevic A."/>
            <person name="Virk D."/>
            <person name="Volkov A."/>
            <person name="Wheeler D.A."/>
            <person name="Zhang Z."/>
            <person name="Bailey J.A."/>
            <person name="Eichler E.E."/>
            <person name="Tuzun E."/>
            <person name="Birney E."/>
            <person name="Mongin E."/>
            <person name="Ureta-Vidal A."/>
            <person name="Woodwark C."/>
            <person name="Zdobnov E."/>
            <person name="Bork P."/>
            <person name="Suyama M."/>
            <person name="Torrents D."/>
            <person name="Alexandersson M."/>
            <person name="Trask B.J."/>
            <person name="Young J.M."/>
            <person name="Huang H."/>
            <person name="Wang H."/>
            <person name="Xing H."/>
            <person name="Daniels S."/>
            <person name="Gietzen D."/>
            <person name="Schmidt J."/>
            <person name="Stevens K."/>
            <person name="Vitt U."/>
            <person name="Wingrove J."/>
            <person name="Camara F."/>
            <person name="Mar Alba M."/>
            <person name="Abril J.F."/>
            <person name="Guigo R."/>
            <person name="Smit A."/>
            <person name="Dubchak I."/>
            <person name="Rubin E.M."/>
            <person name="Couronne O."/>
            <person name="Poliakov A."/>
            <person name="Huebner N."/>
            <person name="Ganten D."/>
            <person name="Goesele C."/>
            <person name="Hummel O."/>
            <person name="Kreitler T."/>
            <person name="Lee Y.-A."/>
            <person name="Monti J."/>
            <person name="Schulz H."/>
            <person name="Zimdahl H."/>
            <person name="Himmelbauer H."/>
            <person name="Lehrach H."/>
            <person name="Jacob H.J."/>
            <person name="Bromberg S."/>
            <person name="Gullings-Handley J."/>
            <person name="Jensen-Seaman M.I."/>
            <person name="Kwitek A.E."/>
            <person name="Lazar J."/>
            <person name="Pasko D."/>
            <person name="Tonellato P.J."/>
            <person name="Twigger S."/>
            <person name="Ponting C.P."/>
            <person name="Duarte J.M."/>
            <person name="Rice S."/>
            <person name="Goodstadt L."/>
            <person name="Beatson S.A."/>
            <person name="Emes R.D."/>
            <person name="Winter E.E."/>
            <person name="Webber C."/>
            <person name="Brandt P."/>
            <person name="Nyakatura G."/>
            <person name="Adetobi M."/>
            <person name="Chiaromonte F."/>
            <person name="Elnitski L."/>
            <person name="Eswara P."/>
            <person name="Hardison R.C."/>
            <person name="Hou M."/>
            <person name="Kolbe D."/>
            <person name="Makova K."/>
            <person name="Miller W."/>
            <person name="Nekrutenko A."/>
            <person name="Riemer C."/>
            <person name="Schwartz S."/>
            <person name="Taylor J."/>
            <person name="Yang S."/>
            <person name="Zhang Y."/>
            <person name="Lindpaintner K."/>
            <person name="Andrews T.D."/>
            <person name="Caccamo M."/>
            <person name="Clamp M."/>
            <person name="Clarke L."/>
            <person name="Curwen V."/>
            <person name="Durbin R.M."/>
            <person name="Eyras E."/>
            <person name="Searle S.M."/>
            <person name="Cooper G.M."/>
            <person name="Batzoglou S."/>
            <person name="Brudno M."/>
            <person name="Sidow A."/>
            <person name="Stone E.A."/>
            <person name="Payseur B.A."/>
            <person name="Bourque G."/>
            <person name="Lopez-Otin C."/>
            <person name="Puente X.S."/>
            <person name="Chakrabarti K."/>
            <person name="Chatterji S."/>
            <person name="Dewey C."/>
            <person name="Pachter L."/>
            <person name="Bray N."/>
            <person name="Yap V.B."/>
            <person name="Caspi A."/>
            <person name="Tesler G."/>
            <person name="Pevzner P.A."/>
            <person name="Haussler D."/>
            <person name="Roskin K.M."/>
            <person name="Baertsch R."/>
            <person name="Clawson H."/>
            <person name="Furey T.S."/>
            <person name="Hinrichs A.S."/>
            <person name="Karolchik D."/>
            <person name="Kent W.J."/>
            <person name="Rosenbloom K.R."/>
            <person name="Trumbower H."/>
            <person name="Weirauch M."/>
            <person name="Cooper D.N."/>
            <person name="Stenson P.D."/>
            <person name="Ma B."/>
            <person name="Brent M."/>
            <person name="Arumugam M."/>
            <person name="Shteynberg D."/>
            <person name="Copley R.R."/>
            <person name="Taylor M.S."/>
            <person name="Riethman H."/>
            <person name="Mudunuri U."/>
            <person name="Peterson J."/>
            <person name="Guyer M."/>
            <person name="Felsenfeld A."/>
            <person name="Old S."/>
            <person name="Mockrin S."/>
            <person name="Collins F.S."/>
        </authorList>
    </citation>
    <scope>NUCLEOTIDE SEQUENCE [LARGE SCALE GENOMIC DNA]</scope>
    <source>
        <strain>Brown Norway</strain>
    </source>
</reference>
<reference key="2">
    <citation type="journal article" date="2004" name="Genome Res.">
        <title>The status, quality, and expansion of the NIH full-length cDNA project: the Mammalian Gene Collection (MGC).</title>
        <authorList>
            <consortium name="The MGC Project Team"/>
        </authorList>
    </citation>
    <scope>NUCLEOTIDE SEQUENCE [LARGE SCALE MRNA]</scope>
    <source>
        <tissue>Kidney</tissue>
    </source>
</reference>
<reference key="3">
    <citation type="journal article" date="2012" name="Nat. Commun.">
        <title>Quantitative maps of protein phosphorylation sites across 14 different rat organs and tissues.</title>
        <authorList>
            <person name="Lundby A."/>
            <person name="Secher A."/>
            <person name="Lage K."/>
            <person name="Nordsborg N.B."/>
            <person name="Dmytriyev A."/>
            <person name="Lundby C."/>
            <person name="Olsen J.V."/>
        </authorList>
    </citation>
    <scope>PHOSPHORYLATION [LARGE SCALE ANALYSIS] AT SER-240</scope>
    <scope>IDENTIFICATION BY MASS SPECTROMETRY [LARGE SCALE ANALYSIS]</scope>
</reference>
<evidence type="ECO:0000250" key="1"/>
<evidence type="ECO:0000255" key="2">
    <source>
        <dbReference type="PROSITE-ProRule" id="PRU01324"/>
    </source>
</evidence>
<evidence type="ECO:0000256" key="3">
    <source>
        <dbReference type="SAM" id="MobiDB-lite"/>
    </source>
</evidence>
<evidence type="ECO:0000305" key="4"/>
<evidence type="ECO:0007744" key="5">
    <source>
    </source>
</evidence>
<protein>
    <recommendedName>
        <fullName>RNA polymerase II elongation factor ELL3</fullName>
    </recommendedName>
</protein>
<accession>Q5XFX8</accession>
<dbReference type="EMBL" id="AC097745">
    <property type="status" value="NOT_ANNOTATED_CDS"/>
    <property type="molecule type" value="Genomic_DNA"/>
</dbReference>
<dbReference type="EMBL" id="BC084693">
    <property type="protein sequence ID" value="AAH84693.1"/>
    <property type="molecule type" value="mRNA"/>
</dbReference>
<dbReference type="RefSeq" id="NP_001011957.1">
    <property type="nucleotide sequence ID" value="NM_001011957.1"/>
</dbReference>
<dbReference type="SMR" id="Q5XFX8"/>
<dbReference type="FunCoup" id="Q5XFX8">
    <property type="interactions" value="57"/>
</dbReference>
<dbReference type="STRING" id="10116.ENSRNOP00000031619"/>
<dbReference type="iPTMnet" id="Q5XFX8"/>
<dbReference type="PhosphoSitePlus" id="Q5XFX8"/>
<dbReference type="PaxDb" id="10116-ENSRNOP00000031619"/>
<dbReference type="GeneID" id="296102"/>
<dbReference type="KEGG" id="rno:296102"/>
<dbReference type="UCSC" id="RGD:1309917">
    <property type="organism name" value="rat"/>
</dbReference>
<dbReference type="AGR" id="RGD:1309917"/>
<dbReference type="CTD" id="80237"/>
<dbReference type="RGD" id="1309917">
    <property type="gene designation" value="Ell3"/>
</dbReference>
<dbReference type="VEuPathDB" id="HostDB:ENSRNOG00000022868"/>
<dbReference type="eggNOG" id="KOG4796">
    <property type="taxonomic scope" value="Eukaryota"/>
</dbReference>
<dbReference type="HOGENOM" id="CLU_692530_0_0_1"/>
<dbReference type="InParanoid" id="Q5XFX8"/>
<dbReference type="OrthoDB" id="6284217at2759"/>
<dbReference type="PhylomeDB" id="Q5XFX8"/>
<dbReference type="TreeFam" id="TF337345"/>
<dbReference type="Reactome" id="R-RNO-6807505">
    <property type="pathway name" value="RNA polymerase II transcribes snRNA genes"/>
</dbReference>
<dbReference type="PRO" id="PR:Q5XFX8"/>
<dbReference type="Proteomes" id="UP000002494">
    <property type="component" value="Chromosome 3"/>
</dbReference>
<dbReference type="Bgee" id="ENSRNOG00000022868">
    <property type="expression patterns" value="Expressed in spleen and 19 other cell types or tissues"/>
</dbReference>
<dbReference type="GO" id="GO:0005634">
    <property type="term" value="C:nucleus"/>
    <property type="evidence" value="ECO:0000250"/>
    <property type="project" value="UniProtKB"/>
</dbReference>
<dbReference type="GO" id="GO:0008023">
    <property type="term" value="C:transcription elongation factor complex"/>
    <property type="evidence" value="ECO:0000250"/>
    <property type="project" value="UniProtKB"/>
</dbReference>
<dbReference type="GO" id="GO:0000987">
    <property type="term" value="F:cis-regulatory region sequence-specific DNA binding"/>
    <property type="evidence" value="ECO:0000250"/>
    <property type="project" value="UniProtKB"/>
</dbReference>
<dbReference type="GO" id="GO:0006354">
    <property type="term" value="P:DNA-templated transcription elongation"/>
    <property type="evidence" value="ECO:0000266"/>
    <property type="project" value="RGD"/>
</dbReference>
<dbReference type="GO" id="GO:0032786">
    <property type="term" value="P:positive regulation of DNA-templated transcription, elongation"/>
    <property type="evidence" value="ECO:0000266"/>
    <property type="project" value="RGD"/>
</dbReference>
<dbReference type="GO" id="GO:0045944">
    <property type="term" value="P:positive regulation of transcription by RNA polymerase II"/>
    <property type="evidence" value="ECO:0000250"/>
    <property type="project" value="UniProtKB"/>
</dbReference>
<dbReference type="GO" id="GO:0032968">
    <property type="term" value="P:positive regulation of transcription elongation by RNA polymerase II"/>
    <property type="evidence" value="ECO:0000318"/>
    <property type="project" value="GO_Central"/>
</dbReference>
<dbReference type="GO" id="GO:0010717">
    <property type="term" value="P:regulation of epithelial to mesenchymal transition"/>
    <property type="evidence" value="ECO:0000250"/>
    <property type="project" value="UniProtKB"/>
</dbReference>
<dbReference type="GO" id="GO:0042795">
    <property type="term" value="P:snRNA transcription by RNA polymerase II"/>
    <property type="evidence" value="ECO:0000250"/>
    <property type="project" value="UniProtKB"/>
</dbReference>
<dbReference type="GO" id="GO:0048863">
    <property type="term" value="P:stem cell differentiation"/>
    <property type="evidence" value="ECO:0000250"/>
    <property type="project" value="UniProtKB"/>
</dbReference>
<dbReference type="GO" id="GO:0006366">
    <property type="term" value="P:transcription by RNA polymerase II"/>
    <property type="evidence" value="ECO:0000250"/>
    <property type="project" value="UniProtKB"/>
</dbReference>
<dbReference type="GO" id="GO:0006368">
    <property type="term" value="P:transcription elongation by RNA polymerase II"/>
    <property type="evidence" value="ECO:0000266"/>
    <property type="project" value="RGD"/>
</dbReference>
<dbReference type="Gene3D" id="6.10.140.340">
    <property type="match status" value="1"/>
</dbReference>
<dbReference type="InterPro" id="IPR031176">
    <property type="entry name" value="ELL/occludin"/>
</dbReference>
<dbReference type="InterPro" id="IPR019464">
    <property type="entry name" value="ELL_N"/>
</dbReference>
<dbReference type="InterPro" id="IPR010844">
    <property type="entry name" value="Occludin_ELL"/>
</dbReference>
<dbReference type="PANTHER" id="PTHR23288">
    <property type="entry name" value="OCCLUDIN AND RNA POLYMERASE II ELONGATION FACTOR ELL"/>
    <property type="match status" value="1"/>
</dbReference>
<dbReference type="PANTHER" id="PTHR23288:SF18">
    <property type="entry name" value="RNA POLYMERASE II ELONGATION FACTOR ELL3"/>
    <property type="match status" value="1"/>
</dbReference>
<dbReference type="Pfam" id="PF10390">
    <property type="entry name" value="ELL"/>
    <property type="match status" value="1"/>
</dbReference>
<dbReference type="Pfam" id="PF07303">
    <property type="entry name" value="Occludin_ELL"/>
    <property type="match status" value="1"/>
</dbReference>
<dbReference type="SUPFAM" id="SSF144292">
    <property type="entry name" value="occludin/ELL-like"/>
    <property type="match status" value="1"/>
</dbReference>
<dbReference type="PROSITE" id="PS51980">
    <property type="entry name" value="OCEL"/>
    <property type="match status" value="1"/>
</dbReference>
<sequence length="387" mass="43803">MEGTQEALSGKMRLLFTPAARTSLLMLRLNEAALRALQECQQQQVRPVIAFQGQRGYLRLPGPGWSCLFSFIVSQCGQEGGGLDLVYQRLGRSGPNCLHCLGSLRERLTIWAAMDTIPAPLLAQEHLTEGTRESESWQDSEDEPEGHPQMALQEVSDPLASNHEQSLPGSSSEPMAQWEVRNHTYLSNREPDQPLPSSASQKRLDKKRSAPITTEEPEEKRPRALPLASSPLQGLSNQDSPEEQDWGQDADGDSRLEQSLSVQSASESPSPEEVPDYLLQYSTIHSAEQQQAYEQDFETDYAEYRILHARVGAASQRFTELGAEIKRLQRGTPEHKVLEDKIVQEYKKFRKRYPSYSEEKRRCEYLHEKLSHIKGLILEFEEKNRGS</sequence>